<organism>
    <name type="scientific">Dictyostelium discoideum</name>
    <name type="common">Social amoeba</name>
    <dbReference type="NCBI Taxonomy" id="44689"/>
    <lineage>
        <taxon>Eukaryota</taxon>
        <taxon>Amoebozoa</taxon>
        <taxon>Evosea</taxon>
        <taxon>Eumycetozoa</taxon>
        <taxon>Dictyostelia</taxon>
        <taxon>Dictyosteliales</taxon>
        <taxon>Dictyosteliaceae</taxon>
        <taxon>Dictyostelium</taxon>
    </lineage>
</organism>
<gene>
    <name type="primary">nek2</name>
    <name type="ORF">DDB_G0270814</name>
</gene>
<protein>
    <recommendedName>
        <fullName>Probable serine/threonine-protein kinase nek2</fullName>
        <ecNumber>2.7.11.1</ecNumber>
    </recommendedName>
    <alternativeName>
        <fullName>Never in mitosis protein A-related protein kinase 2</fullName>
    </alternativeName>
    <alternativeName>
        <fullName>NimA-related protein kinase 2</fullName>
    </alternativeName>
</protein>
<dbReference type="EC" id="2.7.11.1"/>
<dbReference type="EMBL" id="AAFI02000005">
    <property type="protein sequence ID" value="EAL72757.1"/>
    <property type="molecule type" value="Genomic_DNA"/>
</dbReference>
<dbReference type="RefSeq" id="XP_646793.1">
    <property type="nucleotide sequence ID" value="XM_641701.1"/>
</dbReference>
<dbReference type="SMR" id="Q55BN8"/>
<dbReference type="FunCoup" id="Q55BN8">
    <property type="interactions" value="73"/>
</dbReference>
<dbReference type="STRING" id="44689.Q55BN8"/>
<dbReference type="PaxDb" id="44689-DDB0216282"/>
<dbReference type="EnsemblProtists" id="EAL72757">
    <property type="protein sequence ID" value="EAL72757"/>
    <property type="gene ID" value="DDB_G0270814"/>
</dbReference>
<dbReference type="GeneID" id="8617766"/>
<dbReference type="KEGG" id="ddi:DDB_G0270814"/>
<dbReference type="dictyBase" id="DDB_G0270814">
    <property type="gene designation" value="nek2"/>
</dbReference>
<dbReference type="VEuPathDB" id="AmoebaDB:DDB_G0270814"/>
<dbReference type="eggNOG" id="KOG1826">
    <property type="taxonomic scope" value="Eukaryota"/>
</dbReference>
<dbReference type="HOGENOM" id="CLU_000288_63_23_1"/>
<dbReference type="InParanoid" id="Q55BN8"/>
<dbReference type="OMA" id="LALHRCH"/>
<dbReference type="PhylomeDB" id="Q55BN8"/>
<dbReference type="Reactome" id="R-DDI-179409">
    <property type="pathway name" value="APC-Cdc20 mediated degradation of Nek2A"/>
</dbReference>
<dbReference type="PRO" id="PR:Q55BN8"/>
<dbReference type="Proteomes" id="UP000002195">
    <property type="component" value="Chromosome 1"/>
</dbReference>
<dbReference type="GO" id="GO:0005813">
    <property type="term" value="C:centrosome"/>
    <property type="evidence" value="ECO:0000314"/>
    <property type="project" value="dictyBase"/>
</dbReference>
<dbReference type="GO" id="GO:0005737">
    <property type="term" value="C:cytoplasm"/>
    <property type="evidence" value="ECO:0000314"/>
    <property type="project" value="dictyBase"/>
</dbReference>
<dbReference type="GO" id="GO:0005634">
    <property type="term" value="C:nucleus"/>
    <property type="evidence" value="ECO:0000318"/>
    <property type="project" value="GO_Central"/>
</dbReference>
<dbReference type="GO" id="GO:0045335">
    <property type="term" value="C:phagocytic vesicle"/>
    <property type="evidence" value="ECO:0007005"/>
    <property type="project" value="dictyBase"/>
</dbReference>
<dbReference type="GO" id="GO:0005524">
    <property type="term" value="F:ATP binding"/>
    <property type="evidence" value="ECO:0007669"/>
    <property type="project" value="UniProtKB-KW"/>
</dbReference>
<dbReference type="GO" id="GO:0106310">
    <property type="term" value="F:protein serine kinase activity"/>
    <property type="evidence" value="ECO:0007669"/>
    <property type="project" value="RHEA"/>
</dbReference>
<dbReference type="GO" id="GO:0004674">
    <property type="term" value="F:protein serine/threonine kinase activity"/>
    <property type="evidence" value="ECO:0000314"/>
    <property type="project" value="dictyBase"/>
</dbReference>
<dbReference type="GO" id="GO:0007098">
    <property type="term" value="P:centrosome cycle"/>
    <property type="evidence" value="ECO:0000315"/>
    <property type="project" value="dictyBase"/>
</dbReference>
<dbReference type="GO" id="GO:0007059">
    <property type="term" value="P:chromosome segregation"/>
    <property type="evidence" value="ECO:0000315"/>
    <property type="project" value="dictyBase"/>
</dbReference>
<dbReference type="GO" id="GO:0031023">
    <property type="term" value="P:microtubule organizing center organization"/>
    <property type="evidence" value="ECO:0000315"/>
    <property type="project" value="dictyBase"/>
</dbReference>
<dbReference type="GO" id="GO:0000278">
    <property type="term" value="P:mitotic cell cycle"/>
    <property type="evidence" value="ECO:0000314"/>
    <property type="project" value="dictyBase"/>
</dbReference>
<dbReference type="CDD" id="cd08217">
    <property type="entry name" value="STKc_Nek2"/>
    <property type="match status" value="1"/>
</dbReference>
<dbReference type="FunFam" id="3.30.200.20:FF:000097">
    <property type="entry name" value="Probable serine/threonine-protein kinase nek1"/>
    <property type="match status" value="1"/>
</dbReference>
<dbReference type="Gene3D" id="3.30.200.20">
    <property type="entry name" value="Phosphorylase Kinase, domain 1"/>
    <property type="match status" value="1"/>
</dbReference>
<dbReference type="Gene3D" id="1.10.510.10">
    <property type="entry name" value="Transferase(Phosphotransferase) domain 1"/>
    <property type="match status" value="1"/>
</dbReference>
<dbReference type="InterPro" id="IPR011009">
    <property type="entry name" value="Kinase-like_dom_sf"/>
</dbReference>
<dbReference type="InterPro" id="IPR051131">
    <property type="entry name" value="NEK_Ser/Thr_kinase_NIMA"/>
</dbReference>
<dbReference type="InterPro" id="IPR000719">
    <property type="entry name" value="Prot_kinase_dom"/>
</dbReference>
<dbReference type="InterPro" id="IPR008271">
    <property type="entry name" value="Ser/Thr_kinase_AS"/>
</dbReference>
<dbReference type="PANTHER" id="PTHR44899">
    <property type="entry name" value="CAMK FAMILY PROTEIN KINASE"/>
    <property type="match status" value="1"/>
</dbReference>
<dbReference type="PANTHER" id="PTHR44899:SF10">
    <property type="entry name" value="NIMA-RELATED KINASE 2"/>
    <property type="match status" value="1"/>
</dbReference>
<dbReference type="Pfam" id="PF00069">
    <property type="entry name" value="Pkinase"/>
    <property type="match status" value="1"/>
</dbReference>
<dbReference type="SMART" id="SM00220">
    <property type="entry name" value="S_TKc"/>
    <property type="match status" value="1"/>
</dbReference>
<dbReference type="SUPFAM" id="SSF56112">
    <property type="entry name" value="Protein kinase-like (PK-like)"/>
    <property type="match status" value="1"/>
</dbReference>
<dbReference type="PROSITE" id="PS50011">
    <property type="entry name" value="PROTEIN_KINASE_DOM"/>
    <property type="match status" value="1"/>
</dbReference>
<dbReference type="PROSITE" id="PS00108">
    <property type="entry name" value="PROTEIN_KINASE_ST"/>
    <property type="match status" value="1"/>
</dbReference>
<proteinExistence type="evidence at protein level"/>
<name>NEK2_DICDI</name>
<keyword id="KW-0067">ATP-binding</keyword>
<keyword id="KW-0175">Coiled coil</keyword>
<keyword id="KW-0418">Kinase</keyword>
<keyword id="KW-0547">Nucleotide-binding</keyword>
<keyword id="KW-1185">Reference proteome</keyword>
<keyword id="KW-0723">Serine/threonine-protein kinase</keyword>
<keyword id="KW-0808">Transferase</keyword>
<accession>Q55BN8</accession>
<comment type="function">
    <text evidence="4">Involved in centrosome biogenesis. Seems to be required for recruitment of centrosomal material and might be involved in de novo centrosome formation.</text>
</comment>
<comment type="catalytic activity">
    <reaction>
        <text>L-seryl-[protein] + ATP = O-phospho-L-seryl-[protein] + ADP + H(+)</text>
        <dbReference type="Rhea" id="RHEA:17989"/>
        <dbReference type="Rhea" id="RHEA-COMP:9863"/>
        <dbReference type="Rhea" id="RHEA-COMP:11604"/>
        <dbReference type="ChEBI" id="CHEBI:15378"/>
        <dbReference type="ChEBI" id="CHEBI:29999"/>
        <dbReference type="ChEBI" id="CHEBI:30616"/>
        <dbReference type="ChEBI" id="CHEBI:83421"/>
        <dbReference type="ChEBI" id="CHEBI:456216"/>
        <dbReference type="EC" id="2.7.11.1"/>
    </reaction>
</comment>
<comment type="catalytic activity">
    <reaction>
        <text>L-threonyl-[protein] + ATP = O-phospho-L-threonyl-[protein] + ADP + H(+)</text>
        <dbReference type="Rhea" id="RHEA:46608"/>
        <dbReference type="Rhea" id="RHEA-COMP:11060"/>
        <dbReference type="Rhea" id="RHEA-COMP:11605"/>
        <dbReference type="ChEBI" id="CHEBI:15378"/>
        <dbReference type="ChEBI" id="CHEBI:30013"/>
        <dbReference type="ChEBI" id="CHEBI:30616"/>
        <dbReference type="ChEBI" id="CHEBI:61977"/>
        <dbReference type="ChEBI" id="CHEBI:456216"/>
        <dbReference type="EC" id="2.7.11.1"/>
    </reaction>
</comment>
<comment type="similarity">
    <text evidence="5">Belongs to the protein kinase superfamily. NEK Ser/Thr protein kinase family. NIMA subfamily.</text>
</comment>
<reference key="1">
    <citation type="journal article" date="2005" name="Nature">
        <title>The genome of the social amoeba Dictyostelium discoideum.</title>
        <authorList>
            <person name="Eichinger L."/>
            <person name="Pachebat J.A."/>
            <person name="Gloeckner G."/>
            <person name="Rajandream M.A."/>
            <person name="Sucgang R."/>
            <person name="Berriman M."/>
            <person name="Song J."/>
            <person name="Olsen R."/>
            <person name="Szafranski K."/>
            <person name="Xu Q."/>
            <person name="Tunggal B."/>
            <person name="Kummerfeld S."/>
            <person name="Madera M."/>
            <person name="Konfortov B.A."/>
            <person name="Rivero F."/>
            <person name="Bankier A.T."/>
            <person name="Lehmann R."/>
            <person name="Hamlin N."/>
            <person name="Davies R."/>
            <person name="Gaudet P."/>
            <person name="Fey P."/>
            <person name="Pilcher K."/>
            <person name="Chen G."/>
            <person name="Saunders D."/>
            <person name="Sodergren E.J."/>
            <person name="Davis P."/>
            <person name="Kerhornou A."/>
            <person name="Nie X."/>
            <person name="Hall N."/>
            <person name="Anjard C."/>
            <person name="Hemphill L."/>
            <person name="Bason N."/>
            <person name="Farbrother P."/>
            <person name="Desany B."/>
            <person name="Just E."/>
            <person name="Morio T."/>
            <person name="Rost R."/>
            <person name="Churcher C.M."/>
            <person name="Cooper J."/>
            <person name="Haydock S."/>
            <person name="van Driessche N."/>
            <person name="Cronin A."/>
            <person name="Goodhead I."/>
            <person name="Muzny D.M."/>
            <person name="Mourier T."/>
            <person name="Pain A."/>
            <person name="Lu M."/>
            <person name="Harper D."/>
            <person name="Lindsay R."/>
            <person name="Hauser H."/>
            <person name="James K.D."/>
            <person name="Quiles M."/>
            <person name="Madan Babu M."/>
            <person name="Saito T."/>
            <person name="Buchrieser C."/>
            <person name="Wardroper A."/>
            <person name="Felder M."/>
            <person name="Thangavelu M."/>
            <person name="Johnson D."/>
            <person name="Knights A."/>
            <person name="Loulseged H."/>
            <person name="Mungall K.L."/>
            <person name="Oliver K."/>
            <person name="Price C."/>
            <person name="Quail M.A."/>
            <person name="Urushihara H."/>
            <person name="Hernandez J."/>
            <person name="Rabbinowitsch E."/>
            <person name="Steffen D."/>
            <person name="Sanders M."/>
            <person name="Ma J."/>
            <person name="Kohara Y."/>
            <person name="Sharp S."/>
            <person name="Simmonds M.N."/>
            <person name="Spiegler S."/>
            <person name="Tivey A."/>
            <person name="Sugano S."/>
            <person name="White B."/>
            <person name="Walker D."/>
            <person name="Woodward J.R."/>
            <person name="Winckler T."/>
            <person name="Tanaka Y."/>
            <person name="Shaulsky G."/>
            <person name="Schleicher M."/>
            <person name="Weinstock G.M."/>
            <person name="Rosenthal A."/>
            <person name="Cox E.C."/>
            <person name="Chisholm R.L."/>
            <person name="Gibbs R.A."/>
            <person name="Loomis W.F."/>
            <person name="Platzer M."/>
            <person name="Kay R.R."/>
            <person name="Williams J.G."/>
            <person name="Dear P.H."/>
            <person name="Noegel A.A."/>
            <person name="Barrell B.G."/>
            <person name="Kuspa A."/>
        </authorList>
    </citation>
    <scope>NUCLEOTIDE SEQUENCE [LARGE SCALE GENOMIC DNA]</scope>
    <source>
        <strain>AX4</strain>
    </source>
</reference>
<reference key="2">
    <citation type="journal article" date="2004" name="Int. Rev. Cytol.">
        <title>Molecular and functional analysis of the dictyostelium centrosome.</title>
        <authorList>
            <person name="Graef R."/>
            <person name="Daunderer C."/>
            <person name="Schulz I."/>
        </authorList>
    </citation>
    <scope>IDENTIFICATION</scope>
</reference>
<reference key="3">
    <citation type="journal article" date="2006" name="Mol. Cell. Proteomics">
        <title>Proteomics fingerprinting of phagosome maturation and evidence for the role of a Galpha during uptake.</title>
        <authorList>
            <person name="Gotthardt D."/>
            <person name="Blancheteau V."/>
            <person name="Bosserhoff A."/>
            <person name="Ruppert T."/>
            <person name="Delorenzi M."/>
            <person name="Soldati T."/>
        </authorList>
    </citation>
    <scope>IDENTIFICATION BY MASS SPECTROMETRY [LARGE SCALE ANALYSIS]</scope>
    <source>
        <strain>AX2</strain>
    </source>
</reference>
<reference key="4">
    <citation type="journal article" date="2006" name="Trends Mol. Med.">
        <title>Towards a molecular understanding of human diseases using Dictyostelium discoideum.</title>
        <authorList>
            <person name="Williams R.S.B."/>
            <person name="Boeckeler K."/>
            <person name="Graef R."/>
            <person name="Mueller-Taubenberger A."/>
            <person name="Li Z."/>
            <person name="Isberg R.R."/>
            <person name="Wessels D."/>
            <person name="Soll D.R."/>
            <person name="Alexander H."/>
            <person name="Alexander S."/>
        </authorList>
    </citation>
    <scope>FUNCTION</scope>
</reference>
<evidence type="ECO:0000255" key="1"/>
<evidence type="ECO:0000255" key="2">
    <source>
        <dbReference type="PROSITE-ProRule" id="PRU00159"/>
    </source>
</evidence>
<evidence type="ECO:0000255" key="3">
    <source>
        <dbReference type="PROSITE-ProRule" id="PRU10027"/>
    </source>
</evidence>
<evidence type="ECO:0000269" key="4">
    <source>
    </source>
</evidence>
<evidence type="ECO:0000305" key="5"/>
<feature type="chain" id="PRO_0000362027" description="Probable serine/threonine-protein kinase nek2">
    <location>
        <begin position="1"/>
        <end position="418"/>
    </location>
</feature>
<feature type="domain" description="Protein kinase" evidence="2">
    <location>
        <begin position="4"/>
        <end position="264"/>
    </location>
</feature>
<feature type="coiled-coil region" evidence="1">
    <location>
        <begin position="278"/>
        <end position="363"/>
    </location>
</feature>
<feature type="active site" description="Proton acceptor" evidence="2 3">
    <location>
        <position position="135"/>
    </location>
</feature>
<feature type="binding site" evidence="2">
    <location>
        <begin position="10"/>
        <end position="18"/>
    </location>
    <ligand>
        <name>ATP</name>
        <dbReference type="ChEBI" id="CHEBI:30616"/>
    </ligand>
</feature>
<feature type="binding site" evidence="2">
    <location>
        <position position="33"/>
    </location>
    <ligand>
        <name>ATP</name>
        <dbReference type="ChEBI" id="CHEBI:30616"/>
    </ligand>
</feature>
<sequence length="418" mass="48933">MDQYEILGALGKGSFGVVSKIKRKEDGRVLVWKEICYENMQEKEKQLLVNEVNILQKLKHQNIVRYYDRIIDKPSSRLYIIMEHCSGGDLSQLIKKCRNERTYMDEEVIWRTLLQILSALQEIHNRKDGVILHRDIKPGNLFLDENKNIKLGDFGLAKILNESLYAHTFVGTPYYMSPEQIHGLKYNERSDVWSVGCLIYEMATLSPPFEATNQAQLTSKIQVGRYNPIPSQYSEHLSKVISLMINVDPKSRPNVNELLGYSFISFKVKERKLNIYYQGLKQMDEDLKIKEKKLSDIERDLQVKEQHLLLREQQINQREKLLLDKENFETQSRINIMNQQLQQQQQNQLQHQISNLSLNCNNSVNSCSSSSNNNTTNSINTQQQIHIQHNTQQQQQQQQTFQPYQIKRTFTTPLPNFK</sequence>